<keyword id="KW-0539">Nucleus</keyword>
<keyword id="KW-1185">Reference proteome</keyword>
<keyword id="KW-0690">Ribosome biogenesis</keyword>
<feature type="chain" id="PRO_0000156443" description="rRNA processing protein rcl1">
    <location>
        <begin position="1"/>
        <end position="363"/>
    </location>
</feature>
<accession>Q09870</accession>
<dbReference type="EMBL" id="CU329670">
    <property type="protein sequence ID" value="CAA91501.1"/>
    <property type="molecule type" value="Genomic_DNA"/>
</dbReference>
<dbReference type="PIR" id="S62537">
    <property type="entry name" value="S62537"/>
</dbReference>
<dbReference type="RefSeq" id="NP_592892.1">
    <property type="nucleotide sequence ID" value="NM_001018292.2"/>
</dbReference>
<dbReference type="SMR" id="Q09870"/>
<dbReference type="BioGRID" id="279377">
    <property type="interactions" value="24"/>
</dbReference>
<dbReference type="FunCoup" id="Q09870">
    <property type="interactions" value="516"/>
</dbReference>
<dbReference type="STRING" id="284812.Q09870"/>
<dbReference type="iPTMnet" id="Q09870"/>
<dbReference type="PaxDb" id="4896-SPAC12G12.06c.1"/>
<dbReference type="EnsemblFungi" id="SPAC12G12.06c.1">
    <property type="protein sequence ID" value="SPAC12G12.06c.1:pep"/>
    <property type="gene ID" value="SPAC12G12.06c"/>
</dbReference>
<dbReference type="GeneID" id="2542936"/>
<dbReference type="KEGG" id="spo:2542936"/>
<dbReference type="PomBase" id="SPAC12G12.06c">
    <property type="gene designation" value="rcl1"/>
</dbReference>
<dbReference type="VEuPathDB" id="FungiDB:SPAC12G12.06c"/>
<dbReference type="eggNOG" id="KOG3980">
    <property type="taxonomic scope" value="Eukaryota"/>
</dbReference>
<dbReference type="HOGENOM" id="CLU_027882_1_0_1"/>
<dbReference type="InParanoid" id="Q09870"/>
<dbReference type="OMA" id="YTDQNKG"/>
<dbReference type="PhylomeDB" id="Q09870"/>
<dbReference type="Reactome" id="R-SPO-6791226">
    <property type="pathway name" value="Major pathway of rRNA processing in the nucleolus and cytosol"/>
</dbReference>
<dbReference type="PRO" id="PR:Q09870"/>
<dbReference type="Proteomes" id="UP000002485">
    <property type="component" value="Chromosome I"/>
</dbReference>
<dbReference type="GO" id="GO:0005730">
    <property type="term" value="C:nucleolus"/>
    <property type="evidence" value="ECO:0007669"/>
    <property type="project" value="UniProtKB-SubCell"/>
</dbReference>
<dbReference type="GO" id="GO:0004521">
    <property type="term" value="F:RNA endonuclease activity"/>
    <property type="evidence" value="ECO:0000318"/>
    <property type="project" value="GO_Central"/>
</dbReference>
<dbReference type="GO" id="GO:0000479">
    <property type="term" value="P:endonucleolytic cleavage of tricistronic rRNA transcript (SSU-rRNA, 5.8S rRNA, LSU-rRNA)"/>
    <property type="evidence" value="ECO:0000318"/>
    <property type="project" value="GO_Central"/>
</dbReference>
<dbReference type="CDD" id="cd00295">
    <property type="entry name" value="RNA_Cyclase"/>
    <property type="match status" value="1"/>
</dbReference>
<dbReference type="FunFam" id="3.30.360.20:FF:000004">
    <property type="entry name" value="18S rRNA biogenesis protein"/>
    <property type="match status" value="1"/>
</dbReference>
<dbReference type="Gene3D" id="3.65.10.20">
    <property type="entry name" value="RNA 3'-terminal phosphate cyclase domain"/>
    <property type="match status" value="1"/>
</dbReference>
<dbReference type="Gene3D" id="3.30.360.20">
    <property type="entry name" value="RNA 3'-terminal phosphate cyclase, insert domain"/>
    <property type="match status" value="1"/>
</dbReference>
<dbReference type="InterPro" id="IPR013791">
    <property type="entry name" value="RNA3'-term_phos_cycl_insert"/>
</dbReference>
<dbReference type="InterPro" id="IPR023797">
    <property type="entry name" value="RNA3'_phos_cyclase_dom"/>
</dbReference>
<dbReference type="InterPro" id="IPR037136">
    <property type="entry name" value="RNA3'_phos_cyclase_dom_sf"/>
</dbReference>
<dbReference type="InterPro" id="IPR000228">
    <property type="entry name" value="RNA3'_term_phos_cyc"/>
</dbReference>
<dbReference type="InterPro" id="IPR016443">
    <property type="entry name" value="RNA3'_term_phos_cyc_type_2"/>
</dbReference>
<dbReference type="InterPro" id="IPR020719">
    <property type="entry name" value="RNA3'_term_phos_cycl-like_CS"/>
</dbReference>
<dbReference type="InterPro" id="IPR013792">
    <property type="entry name" value="RNA3'P_cycl/enolpyr_Trfase_a/b"/>
</dbReference>
<dbReference type="InterPro" id="IPR036553">
    <property type="entry name" value="RPTC_insert"/>
</dbReference>
<dbReference type="NCBIfam" id="TIGR03400">
    <property type="entry name" value="18S_RNA_Rcl1p"/>
    <property type="match status" value="1"/>
</dbReference>
<dbReference type="PANTHER" id="PTHR11096">
    <property type="entry name" value="RNA 3' TERMINAL PHOSPHATE CYCLASE"/>
    <property type="match status" value="1"/>
</dbReference>
<dbReference type="PANTHER" id="PTHR11096:SF1">
    <property type="entry name" value="RNA 3'-TERMINAL PHOSPHATE CYCLASE-LIKE PROTEIN"/>
    <property type="match status" value="1"/>
</dbReference>
<dbReference type="Pfam" id="PF01137">
    <property type="entry name" value="RTC"/>
    <property type="match status" value="1"/>
</dbReference>
<dbReference type="Pfam" id="PF05189">
    <property type="entry name" value="RTC_insert"/>
    <property type="match status" value="1"/>
</dbReference>
<dbReference type="SUPFAM" id="SSF55205">
    <property type="entry name" value="EPT/RTPC-like"/>
    <property type="match status" value="1"/>
</dbReference>
<dbReference type="PROSITE" id="PS01287">
    <property type="entry name" value="RTC"/>
    <property type="match status" value="1"/>
</dbReference>
<proteinExistence type="inferred from homology"/>
<reference key="1">
    <citation type="journal article" date="2002" name="Nature">
        <title>The genome sequence of Schizosaccharomyces pombe.</title>
        <authorList>
            <person name="Wood V."/>
            <person name="Gwilliam R."/>
            <person name="Rajandream M.A."/>
            <person name="Lyne M.H."/>
            <person name="Lyne R."/>
            <person name="Stewart A."/>
            <person name="Sgouros J.G."/>
            <person name="Peat N."/>
            <person name="Hayles J."/>
            <person name="Baker S.G."/>
            <person name="Basham D."/>
            <person name="Bowman S."/>
            <person name="Brooks K."/>
            <person name="Brown D."/>
            <person name="Brown S."/>
            <person name="Chillingworth T."/>
            <person name="Churcher C.M."/>
            <person name="Collins M."/>
            <person name="Connor R."/>
            <person name="Cronin A."/>
            <person name="Davis P."/>
            <person name="Feltwell T."/>
            <person name="Fraser A."/>
            <person name="Gentles S."/>
            <person name="Goble A."/>
            <person name="Hamlin N."/>
            <person name="Harris D.E."/>
            <person name="Hidalgo J."/>
            <person name="Hodgson G."/>
            <person name="Holroyd S."/>
            <person name="Hornsby T."/>
            <person name="Howarth S."/>
            <person name="Huckle E.J."/>
            <person name="Hunt S."/>
            <person name="Jagels K."/>
            <person name="James K.D."/>
            <person name="Jones L."/>
            <person name="Jones M."/>
            <person name="Leather S."/>
            <person name="McDonald S."/>
            <person name="McLean J."/>
            <person name="Mooney P."/>
            <person name="Moule S."/>
            <person name="Mungall K.L."/>
            <person name="Murphy L.D."/>
            <person name="Niblett D."/>
            <person name="Odell C."/>
            <person name="Oliver K."/>
            <person name="O'Neil S."/>
            <person name="Pearson D."/>
            <person name="Quail M.A."/>
            <person name="Rabbinowitsch E."/>
            <person name="Rutherford K.M."/>
            <person name="Rutter S."/>
            <person name="Saunders D."/>
            <person name="Seeger K."/>
            <person name="Sharp S."/>
            <person name="Skelton J."/>
            <person name="Simmonds M.N."/>
            <person name="Squares R."/>
            <person name="Squares S."/>
            <person name="Stevens K."/>
            <person name="Taylor K."/>
            <person name="Taylor R.G."/>
            <person name="Tivey A."/>
            <person name="Walsh S.V."/>
            <person name="Warren T."/>
            <person name="Whitehead S."/>
            <person name="Woodward J.R."/>
            <person name="Volckaert G."/>
            <person name="Aert R."/>
            <person name="Robben J."/>
            <person name="Grymonprez B."/>
            <person name="Weltjens I."/>
            <person name="Vanstreels E."/>
            <person name="Rieger M."/>
            <person name="Schaefer M."/>
            <person name="Mueller-Auer S."/>
            <person name="Gabel C."/>
            <person name="Fuchs M."/>
            <person name="Duesterhoeft A."/>
            <person name="Fritzc C."/>
            <person name="Holzer E."/>
            <person name="Moestl D."/>
            <person name="Hilbert H."/>
            <person name="Borzym K."/>
            <person name="Langer I."/>
            <person name="Beck A."/>
            <person name="Lehrach H."/>
            <person name="Reinhardt R."/>
            <person name="Pohl T.M."/>
            <person name="Eger P."/>
            <person name="Zimmermann W."/>
            <person name="Wedler H."/>
            <person name="Wambutt R."/>
            <person name="Purnelle B."/>
            <person name="Goffeau A."/>
            <person name="Cadieu E."/>
            <person name="Dreano S."/>
            <person name="Gloux S."/>
            <person name="Lelaure V."/>
            <person name="Mottier S."/>
            <person name="Galibert F."/>
            <person name="Aves S.J."/>
            <person name="Xiang Z."/>
            <person name="Hunt C."/>
            <person name="Moore K."/>
            <person name="Hurst S.M."/>
            <person name="Lucas M."/>
            <person name="Rochet M."/>
            <person name="Gaillardin C."/>
            <person name="Tallada V.A."/>
            <person name="Garzon A."/>
            <person name="Thode G."/>
            <person name="Daga R.R."/>
            <person name="Cruzado L."/>
            <person name="Jimenez J."/>
            <person name="Sanchez M."/>
            <person name="del Rey F."/>
            <person name="Benito J."/>
            <person name="Dominguez A."/>
            <person name="Revuelta J.L."/>
            <person name="Moreno S."/>
            <person name="Armstrong J."/>
            <person name="Forsburg S.L."/>
            <person name="Cerutti L."/>
            <person name="Lowe T."/>
            <person name="McCombie W.R."/>
            <person name="Paulsen I."/>
            <person name="Potashkin J."/>
            <person name="Shpakovski G.V."/>
            <person name="Ussery D."/>
            <person name="Barrell B.G."/>
            <person name="Nurse P."/>
        </authorList>
    </citation>
    <scope>NUCLEOTIDE SEQUENCE [LARGE SCALE GENOMIC DNA]</scope>
    <source>
        <strain>972 / ATCC 24843</strain>
    </source>
</reference>
<sequence length="363" mass="39525">MSTGQLKRFKGCEYLTHRLVLATLSGTPIRVEGIYPDEADPGVKDYQVSFLRLLEKLTNGSVIEISYTGTSFIYRPGNIIGGRVVHDCPTTKGIGYFLEPILILCLFAKTPTSLTLTGVTSSNEDIGVDVLRTSVLPSLQKRFQVGDELELRILKRGSAPGGGGEVNFLCPVIKESLPPIRLSEFGRVFRIRGIASSTRVSPAFANRLVESARGVLNPFIPDVFIYTDVRRGDECGNSPGYSITLVAETNKGCSYAAEHCGEAGETPEDVGSFCAKKLLEVIESGGCVDPYTQPSTLTGMLLSSEDVNTIVVGQLGITSQLVVFLRDVKALFNCEYRFKELESGQVEMSCLGKGYLNVNRRIQ</sequence>
<evidence type="ECO:0000250" key="1">
    <source>
        <dbReference type="UniProtKB" id="Q08096"/>
    </source>
</evidence>
<evidence type="ECO:0000305" key="2"/>
<protein>
    <recommendedName>
        <fullName>rRNA processing protein rcl1</fullName>
    </recommendedName>
</protein>
<gene>
    <name type="primary">rcl1</name>
    <name type="ORF">SPAC12G12.06c</name>
</gene>
<name>RCL1_SCHPO</name>
<organism>
    <name type="scientific">Schizosaccharomyces pombe (strain 972 / ATCC 24843)</name>
    <name type="common">Fission yeast</name>
    <dbReference type="NCBI Taxonomy" id="284812"/>
    <lineage>
        <taxon>Eukaryota</taxon>
        <taxon>Fungi</taxon>
        <taxon>Dikarya</taxon>
        <taxon>Ascomycota</taxon>
        <taxon>Taphrinomycotina</taxon>
        <taxon>Schizosaccharomycetes</taxon>
        <taxon>Schizosaccharomycetales</taxon>
        <taxon>Schizosaccharomycetaceae</taxon>
        <taxon>Schizosaccharomyces</taxon>
    </lineage>
</organism>
<comment type="function">
    <text evidence="1">Does not have cyclase activity (By similarity). Plays a role in 40S-ribosomal-subunit biogenesis in the early pre-rRNA processing steps at sites A0, A1 and A2 that are required for proper maturation of the 18S RNA (By similarity). Rcl1 activates bms1 by promoting GDP/GTP exchange (By similarity).</text>
</comment>
<comment type="subunit">
    <text evidence="1">Interacts directly with bms1 and the U3 snoRNA to form a stable subcomplex (By similarity). Component of the 90S small subunit processome also known as 90S pre-ribosome that consists of the 35S pre-rRNA, early-associating ribosomal proteins most of which are part of the small ribosomal subunit, the U3 snoRNA and associated proteins (By similarity).</text>
</comment>
<comment type="subcellular location">
    <subcellularLocation>
        <location evidence="1">Nucleus</location>
        <location evidence="1">Nucleolus</location>
    </subcellularLocation>
</comment>
<comment type="similarity">
    <text evidence="2">Belongs to the RNA 3'-terminal cyclase family. Type 2 subfamily.</text>
</comment>